<keyword id="KW-0001">2Fe-2S</keyword>
<keyword id="KW-0238">DNA-binding</keyword>
<keyword id="KW-0408">Iron</keyword>
<keyword id="KW-0411">Iron-sulfur</keyword>
<keyword id="KW-0479">Metal-binding</keyword>
<keyword id="KW-0678">Repressor</keyword>
<keyword id="KW-0804">Transcription</keyword>
<keyword id="KW-0805">Transcription regulation</keyword>
<proteinExistence type="inferred from homology"/>
<evidence type="ECO:0000255" key="1">
    <source>
        <dbReference type="HAMAP-Rule" id="MF_01177"/>
    </source>
</evidence>
<organism>
    <name type="scientific">Enterobacter sp. (strain 638)</name>
    <dbReference type="NCBI Taxonomy" id="399742"/>
    <lineage>
        <taxon>Bacteria</taxon>
        <taxon>Pseudomonadati</taxon>
        <taxon>Pseudomonadota</taxon>
        <taxon>Gammaproteobacteria</taxon>
        <taxon>Enterobacterales</taxon>
        <taxon>Enterobacteriaceae</taxon>
        <taxon>Enterobacter</taxon>
    </lineage>
</organism>
<dbReference type="EMBL" id="CP000653">
    <property type="protein sequence ID" value="ABP59049.1"/>
    <property type="molecule type" value="Genomic_DNA"/>
</dbReference>
<dbReference type="RefSeq" id="WP_011915622.1">
    <property type="nucleotide sequence ID" value="NC_009436.1"/>
</dbReference>
<dbReference type="SMR" id="A4W5R9"/>
<dbReference type="STRING" id="399742.Ent638_0361"/>
<dbReference type="GeneID" id="93307543"/>
<dbReference type="KEGG" id="ent:Ent638_0361"/>
<dbReference type="eggNOG" id="COG1959">
    <property type="taxonomic scope" value="Bacteria"/>
</dbReference>
<dbReference type="HOGENOM" id="CLU_107144_2_1_6"/>
<dbReference type="OrthoDB" id="9795923at2"/>
<dbReference type="Proteomes" id="UP000000230">
    <property type="component" value="Chromosome"/>
</dbReference>
<dbReference type="GO" id="GO:0005829">
    <property type="term" value="C:cytosol"/>
    <property type="evidence" value="ECO:0007669"/>
    <property type="project" value="TreeGrafter"/>
</dbReference>
<dbReference type="GO" id="GO:0051537">
    <property type="term" value="F:2 iron, 2 sulfur cluster binding"/>
    <property type="evidence" value="ECO:0007669"/>
    <property type="project" value="UniProtKB-KW"/>
</dbReference>
<dbReference type="GO" id="GO:0003700">
    <property type="term" value="F:DNA-binding transcription factor activity"/>
    <property type="evidence" value="ECO:0007669"/>
    <property type="project" value="UniProtKB-UniRule"/>
</dbReference>
<dbReference type="GO" id="GO:0003690">
    <property type="term" value="F:double-stranded DNA binding"/>
    <property type="evidence" value="ECO:0007669"/>
    <property type="project" value="UniProtKB-UniRule"/>
</dbReference>
<dbReference type="GO" id="GO:0005506">
    <property type="term" value="F:iron ion binding"/>
    <property type="evidence" value="ECO:0007669"/>
    <property type="project" value="UniProtKB-UniRule"/>
</dbReference>
<dbReference type="GO" id="GO:0045892">
    <property type="term" value="P:negative regulation of DNA-templated transcription"/>
    <property type="evidence" value="ECO:0007669"/>
    <property type="project" value="InterPro"/>
</dbReference>
<dbReference type="FunFam" id="1.10.10.10:FF:000105">
    <property type="entry name" value="HTH-type transcriptional repressor NsrR"/>
    <property type="match status" value="1"/>
</dbReference>
<dbReference type="Gene3D" id="1.10.10.10">
    <property type="entry name" value="Winged helix-like DNA-binding domain superfamily/Winged helix DNA-binding domain"/>
    <property type="match status" value="1"/>
</dbReference>
<dbReference type="HAMAP" id="MF_01177">
    <property type="entry name" value="HTH_type_NsrR"/>
    <property type="match status" value="1"/>
</dbReference>
<dbReference type="InterPro" id="IPR030489">
    <property type="entry name" value="TR_Rrf2-type_CS"/>
</dbReference>
<dbReference type="InterPro" id="IPR000944">
    <property type="entry name" value="Tscrpt_reg_Rrf2"/>
</dbReference>
<dbReference type="InterPro" id="IPR023761">
    <property type="entry name" value="Tscrpt_rep_HTH_NsrR"/>
</dbReference>
<dbReference type="InterPro" id="IPR036388">
    <property type="entry name" value="WH-like_DNA-bd_sf"/>
</dbReference>
<dbReference type="InterPro" id="IPR036390">
    <property type="entry name" value="WH_DNA-bd_sf"/>
</dbReference>
<dbReference type="NCBIfam" id="NF008240">
    <property type="entry name" value="PRK11014.1"/>
    <property type="match status" value="1"/>
</dbReference>
<dbReference type="NCBIfam" id="TIGR00738">
    <property type="entry name" value="rrf2_super"/>
    <property type="match status" value="1"/>
</dbReference>
<dbReference type="PANTHER" id="PTHR33221:SF4">
    <property type="entry name" value="HTH-TYPE TRANSCRIPTIONAL REPRESSOR NSRR"/>
    <property type="match status" value="1"/>
</dbReference>
<dbReference type="PANTHER" id="PTHR33221">
    <property type="entry name" value="WINGED HELIX-TURN-HELIX TRANSCRIPTIONAL REGULATOR, RRF2 FAMILY"/>
    <property type="match status" value="1"/>
</dbReference>
<dbReference type="Pfam" id="PF02082">
    <property type="entry name" value="Rrf2"/>
    <property type="match status" value="1"/>
</dbReference>
<dbReference type="SUPFAM" id="SSF46785">
    <property type="entry name" value="Winged helix' DNA-binding domain"/>
    <property type="match status" value="1"/>
</dbReference>
<dbReference type="PROSITE" id="PS01332">
    <property type="entry name" value="HTH_RRF2_1"/>
    <property type="match status" value="1"/>
</dbReference>
<dbReference type="PROSITE" id="PS51197">
    <property type="entry name" value="HTH_RRF2_2"/>
    <property type="match status" value="1"/>
</dbReference>
<name>NSRR_ENT38</name>
<gene>
    <name evidence="1" type="primary">nsrR</name>
    <name type="ordered locus">Ent638_0361</name>
</gene>
<accession>A4W5R9</accession>
<protein>
    <recommendedName>
        <fullName evidence="1">HTH-type transcriptional repressor NsrR</fullName>
    </recommendedName>
</protein>
<sequence>MQLTSFTDYGLRALIYMASLPQGQMTSISQVTEVYGVSRNHMVKIINQLSRAGYVTAVRGKNGGIRLGKPAQSIRVGDVVRELEPLSLVNCSSDFCHITPACRLKQALSKAVQSFLMELDNYTLADLVEENQPLYKLLLVE</sequence>
<feature type="chain" id="PRO_1000085434" description="HTH-type transcriptional repressor NsrR">
    <location>
        <begin position="1"/>
        <end position="141"/>
    </location>
</feature>
<feature type="domain" description="HTH rrf2-type" evidence="1">
    <location>
        <begin position="2"/>
        <end position="129"/>
    </location>
</feature>
<feature type="DNA-binding region" description="H-T-H motif" evidence="1">
    <location>
        <begin position="28"/>
        <end position="51"/>
    </location>
</feature>
<feature type="binding site" evidence="1">
    <location>
        <position position="91"/>
    </location>
    <ligand>
        <name>[2Fe-2S] cluster</name>
        <dbReference type="ChEBI" id="CHEBI:190135"/>
    </ligand>
</feature>
<feature type="binding site" evidence="1">
    <location>
        <position position="96"/>
    </location>
    <ligand>
        <name>[2Fe-2S] cluster</name>
        <dbReference type="ChEBI" id="CHEBI:190135"/>
    </ligand>
</feature>
<feature type="binding site" evidence="1">
    <location>
        <position position="102"/>
    </location>
    <ligand>
        <name>[2Fe-2S] cluster</name>
        <dbReference type="ChEBI" id="CHEBI:190135"/>
    </ligand>
</feature>
<comment type="function">
    <text evidence="1">Nitric oxide-sensitive repressor of genes involved in protecting the cell against nitrosative stress. May require iron for activity.</text>
</comment>
<comment type="cofactor">
    <cofactor evidence="1">
        <name>[2Fe-2S] cluster</name>
        <dbReference type="ChEBI" id="CHEBI:190135"/>
    </cofactor>
    <text evidence="1">Binds 1 [2Fe-2S] cluster per subunit.</text>
</comment>
<reference key="1">
    <citation type="journal article" date="2010" name="PLoS Genet.">
        <title>Genome sequence of the plant growth promoting endophytic bacterium Enterobacter sp. 638.</title>
        <authorList>
            <person name="Taghavi S."/>
            <person name="van der Lelie D."/>
            <person name="Hoffman A."/>
            <person name="Zhang Y.B."/>
            <person name="Walla M.D."/>
            <person name="Vangronsveld J."/>
            <person name="Newman L."/>
            <person name="Monchy S."/>
        </authorList>
    </citation>
    <scope>NUCLEOTIDE SEQUENCE [LARGE SCALE GENOMIC DNA]</scope>
    <source>
        <strain>638</strain>
    </source>
</reference>